<gene>
    <name type="primary">Efcab10</name>
</gene>
<sequence>MEPVADRELQAKLYLERHRIMELLNQLTSFLLFARPKKPREYLISLLERLRVAKATHVAFPYFMDNSNTVSMFEMMDMAGRGCISFVQYKEALKNLGLCTADEVLNDDGHIITLDTFRDEMNKRMEKMWSMF</sequence>
<proteinExistence type="evidence at protein level"/>
<dbReference type="EMBL" id="AK015697">
    <property type="protein sequence ID" value="BAB29935.1"/>
    <property type="molecule type" value="mRNA"/>
</dbReference>
<dbReference type="EMBL" id="BC119387">
    <property type="status" value="NOT_ANNOTATED_CDS"/>
    <property type="molecule type" value="mRNA"/>
</dbReference>
<dbReference type="EMBL" id="BC120662">
    <property type="status" value="NOT_ANNOTATED_CDS"/>
    <property type="molecule type" value="mRNA"/>
</dbReference>
<dbReference type="CCDS" id="CCDS49048.1"/>
<dbReference type="RefSeq" id="NP_083428.1">
    <property type="nucleotide sequence ID" value="NM_029152.1"/>
</dbReference>
<dbReference type="STRING" id="10090.ENSMUSP00000020878"/>
<dbReference type="PaxDb" id="10090-ENSMUSP00000020878"/>
<dbReference type="ProteomicsDB" id="277690"/>
<dbReference type="Antibodypedia" id="9327">
    <property type="antibodies" value="19 antibodies from 8 providers"/>
</dbReference>
<dbReference type="Ensembl" id="ENSMUST00000020878.8">
    <property type="protein sequence ID" value="ENSMUSP00000020878.7"/>
    <property type="gene ID" value="ENSMUSG00000020562.8"/>
</dbReference>
<dbReference type="GeneID" id="75040"/>
<dbReference type="KEGG" id="mmu:75040"/>
<dbReference type="UCSC" id="uc007nit.2">
    <property type="organism name" value="mouse"/>
</dbReference>
<dbReference type="AGR" id="MGI:1922290"/>
<dbReference type="CTD" id="100130771"/>
<dbReference type="MGI" id="MGI:1922290">
    <property type="gene designation" value="Efcab10"/>
</dbReference>
<dbReference type="VEuPathDB" id="HostDB:ENSMUSG00000020562"/>
<dbReference type="eggNOG" id="ENOG502S6BT">
    <property type="taxonomic scope" value="Eukaryota"/>
</dbReference>
<dbReference type="GeneTree" id="ENSGT00940000154487"/>
<dbReference type="HOGENOM" id="CLU_141721_1_0_1"/>
<dbReference type="InParanoid" id="Q9D581"/>
<dbReference type="OMA" id="SMLLFYR"/>
<dbReference type="OrthoDB" id="10260455at2759"/>
<dbReference type="PhylomeDB" id="Q9D581"/>
<dbReference type="TreeFam" id="TF330749"/>
<dbReference type="BioGRID-ORCS" id="75040">
    <property type="hits" value="3 hits in 76 CRISPR screens"/>
</dbReference>
<dbReference type="PRO" id="PR:Q9D581"/>
<dbReference type="Proteomes" id="UP000000589">
    <property type="component" value="Chromosome 12"/>
</dbReference>
<dbReference type="RNAct" id="Q9D581">
    <property type="molecule type" value="protein"/>
</dbReference>
<dbReference type="Bgee" id="ENSMUSG00000020562">
    <property type="expression patterns" value="Expressed in spermatid and 51 other cell types or tissues"/>
</dbReference>
<dbReference type="GO" id="GO:0005509">
    <property type="term" value="F:calcium ion binding"/>
    <property type="evidence" value="ECO:0007669"/>
    <property type="project" value="InterPro"/>
</dbReference>
<dbReference type="CDD" id="cd22976">
    <property type="entry name" value="DD_EFCAB10"/>
    <property type="match status" value="1"/>
</dbReference>
<dbReference type="InterPro" id="IPR049760">
    <property type="entry name" value="DD_EFCAB10"/>
</dbReference>
<dbReference type="InterPro" id="IPR011992">
    <property type="entry name" value="EF-hand-dom_pair"/>
</dbReference>
<dbReference type="InterPro" id="IPR056587">
    <property type="entry name" value="EF_EFCAB10_C"/>
</dbReference>
<dbReference type="InterPro" id="IPR002048">
    <property type="entry name" value="EF_hand_dom"/>
</dbReference>
<dbReference type="InterPro" id="IPR039879">
    <property type="entry name" value="EFC10"/>
</dbReference>
<dbReference type="PANTHER" id="PTHR21847">
    <property type="entry name" value="EF-HAND CALCIUM-BINDING DOMAIN-CONTAINING PROTEIN 10"/>
    <property type="match status" value="1"/>
</dbReference>
<dbReference type="PANTHER" id="PTHR21847:SF1">
    <property type="entry name" value="EF-HAND CALCIUM-BINDING DOMAIN-CONTAINING PROTEIN 10"/>
    <property type="match status" value="1"/>
</dbReference>
<dbReference type="Pfam" id="PF24548">
    <property type="entry name" value="EF_EFCAB10_C"/>
    <property type="match status" value="1"/>
</dbReference>
<dbReference type="SUPFAM" id="SSF47391">
    <property type="entry name" value="Dimerization-anchoring domain of cAMP-dependent PK regulatory subunit"/>
    <property type="match status" value="1"/>
</dbReference>
<dbReference type="SUPFAM" id="SSF47473">
    <property type="entry name" value="EF-hand"/>
    <property type="match status" value="1"/>
</dbReference>
<dbReference type="PROSITE" id="PS50222">
    <property type="entry name" value="EF_HAND_2"/>
    <property type="match status" value="2"/>
</dbReference>
<feature type="chain" id="PRO_0000340681" description="EF-hand calcium-binding domain-containing protein 10">
    <location>
        <begin position="1"/>
        <end position="132"/>
    </location>
</feature>
<feature type="domain" description="EF-hand 1" evidence="1">
    <location>
        <begin position="64"/>
        <end position="99"/>
    </location>
</feature>
<feature type="domain" description="EF-hand 2" evidence="1">
    <location>
        <begin position="120"/>
        <end position="132"/>
    </location>
</feature>
<keyword id="KW-1185">Reference proteome</keyword>
<keyword id="KW-0677">Repeat</keyword>
<name>EFC10_MOUSE</name>
<protein>
    <recommendedName>
        <fullName>EF-hand calcium-binding domain-containing protein 10</fullName>
    </recommendedName>
</protein>
<organism>
    <name type="scientific">Mus musculus</name>
    <name type="common">Mouse</name>
    <dbReference type="NCBI Taxonomy" id="10090"/>
    <lineage>
        <taxon>Eukaryota</taxon>
        <taxon>Metazoa</taxon>
        <taxon>Chordata</taxon>
        <taxon>Craniata</taxon>
        <taxon>Vertebrata</taxon>
        <taxon>Euteleostomi</taxon>
        <taxon>Mammalia</taxon>
        <taxon>Eutheria</taxon>
        <taxon>Euarchontoglires</taxon>
        <taxon>Glires</taxon>
        <taxon>Rodentia</taxon>
        <taxon>Myomorpha</taxon>
        <taxon>Muroidea</taxon>
        <taxon>Muridae</taxon>
        <taxon>Murinae</taxon>
        <taxon>Mus</taxon>
        <taxon>Mus</taxon>
    </lineage>
</organism>
<accession>Q9D581</accession>
<reference key="1">
    <citation type="journal article" date="2005" name="Science">
        <title>The transcriptional landscape of the mammalian genome.</title>
        <authorList>
            <person name="Carninci P."/>
            <person name="Kasukawa T."/>
            <person name="Katayama S."/>
            <person name="Gough J."/>
            <person name="Frith M.C."/>
            <person name="Maeda N."/>
            <person name="Oyama R."/>
            <person name="Ravasi T."/>
            <person name="Lenhard B."/>
            <person name="Wells C."/>
            <person name="Kodzius R."/>
            <person name="Shimokawa K."/>
            <person name="Bajic V.B."/>
            <person name="Brenner S.E."/>
            <person name="Batalov S."/>
            <person name="Forrest A.R."/>
            <person name="Zavolan M."/>
            <person name="Davis M.J."/>
            <person name="Wilming L.G."/>
            <person name="Aidinis V."/>
            <person name="Allen J.E."/>
            <person name="Ambesi-Impiombato A."/>
            <person name="Apweiler R."/>
            <person name="Aturaliya R.N."/>
            <person name="Bailey T.L."/>
            <person name="Bansal M."/>
            <person name="Baxter L."/>
            <person name="Beisel K.W."/>
            <person name="Bersano T."/>
            <person name="Bono H."/>
            <person name="Chalk A.M."/>
            <person name="Chiu K.P."/>
            <person name="Choudhary V."/>
            <person name="Christoffels A."/>
            <person name="Clutterbuck D.R."/>
            <person name="Crowe M.L."/>
            <person name="Dalla E."/>
            <person name="Dalrymple B.P."/>
            <person name="de Bono B."/>
            <person name="Della Gatta G."/>
            <person name="di Bernardo D."/>
            <person name="Down T."/>
            <person name="Engstrom P."/>
            <person name="Fagiolini M."/>
            <person name="Faulkner G."/>
            <person name="Fletcher C.F."/>
            <person name="Fukushima T."/>
            <person name="Furuno M."/>
            <person name="Futaki S."/>
            <person name="Gariboldi M."/>
            <person name="Georgii-Hemming P."/>
            <person name="Gingeras T.R."/>
            <person name="Gojobori T."/>
            <person name="Green R.E."/>
            <person name="Gustincich S."/>
            <person name="Harbers M."/>
            <person name="Hayashi Y."/>
            <person name="Hensch T.K."/>
            <person name="Hirokawa N."/>
            <person name="Hill D."/>
            <person name="Huminiecki L."/>
            <person name="Iacono M."/>
            <person name="Ikeo K."/>
            <person name="Iwama A."/>
            <person name="Ishikawa T."/>
            <person name="Jakt M."/>
            <person name="Kanapin A."/>
            <person name="Katoh M."/>
            <person name="Kawasawa Y."/>
            <person name="Kelso J."/>
            <person name="Kitamura H."/>
            <person name="Kitano H."/>
            <person name="Kollias G."/>
            <person name="Krishnan S.P."/>
            <person name="Kruger A."/>
            <person name="Kummerfeld S.K."/>
            <person name="Kurochkin I.V."/>
            <person name="Lareau L.F."/>
            <person name="Lazarevic D."/>
            <person name="Lipovich L."/>
            <person name="Liu J."/>
            <person name="Liuni S."/>
            <person name="McWilliam S."/>
            <person name="Madan Babu M."/>
            <person name="Madera M."/>
            <person name="Marchionni L."/>
            <person name="Matsuda H."/>
            <person name="Matsuzawa S."/>
            <person name="Miki H."/>
            <person name="Mignone F."/>
            <person name="Miyake S."/>
            <person name="Morris K."/>
            <person name="Mottagui-Tabar S."/>
            <person name="Mulder N."/>
            <person name="Nakano N."/>
            <person name="Nakauchi H."/>
            <person name="Ng P."/>
            <person name="Nilsson R."/>
            <person name="Nishiguchi S."/>
            <person name="Nishikawa S."/>
            <person name="Nori F."/>
            <person name="Ohara O."/>
            <person name="Okazaki Y."/>
            <person name="Orlando V."/>
            <person name="Pang K.C."/>
            <person name="Pavan W.J."/>
            <person name="Pavesi G."/>
            <person name="Pesole G."/>
            <person name="Petrovsky N."/>
            <person name="Piazza S."/>
            <person name="Reed J."/>
            <person name="Reid J.F."/>
            <person name="Ring B.Z."/>
            <person name="Ringwald M."/>
            <person name="Rost B."/>
            <person name="Ruan Y."/>
            <person name="Salzberg S.L."/>
            <person name="Sandelin A."/>
            <person name="Schneider C."/>
            <person name="Schoenbach C."/>
            <person name="Sekiguchi K."/>
            <person name="Semple C.A."/>
            <person name="Seno S."/>
            <person name="Sessa L."/>
            <person name="Sheng Y."/>
            <person name="Shibata Y."/>
            <person name="Shimada H."/>
            <person name="Shimada K."/>
            <person name="Silva D."/>
            <person name="Sinclair B."/>
            <person name="Sperling S."/>
            <person name="Stupka E."/>
            <person name="Sugiura K."/>
            <person name="Sultana R."/>
            <person name="Takenaka Y."/>
            <person name="Taki K."/>
            <person name="Tammoja K."/>
            <person name="Tan S.L."/>
            <person name="Tang S."/>
            <person name="Taylor M.S."/>
            <person name="Tegner J."/>
            <person name="Teichmann S.A."/>
            <person name="Ueda H.R."/>
            <person name="van Nimwegen E."/>
            <person name="Verardo R."/>
            <person name="Wei C.L."/>
            <person name="Yagi K."/>
            <person name="Yamanishi H."/>
            <person name="Zabarovsky E."/>
            <person name="Zhu S."/>
            <person name="Zimmer A."/>
            <person name="Hide W."/>
            <person name="Bult C."/>
            <person name="Grimmond S.M."/>
            <person name="Teasdale R.D."/>
            <person name="Liu E.T."/>
            <person name="Brusic V."/>
            <person name="Quackenbush J."/>
            <person name="Wahlestedt C."/>
            <person name="Mattick J.S."/>
            <person name="Hume D.A."/>
            <person name="Kai C."/>
            <person name="Sasaki D."/>
            <person name="Tomaru Y."/>
            <person name="Fukuda S."/>
            <person name="Kanamori-Katayama M."/>
            <person name="Suzuki M."/>
            <person name="Aoki J."/>
            <person name="Arakawa T."/>
            <person name="Iida J."/>
            <person name="Imamura K."/>
            <person name="Itoh M."/>
            <person name="Kato T."/>
            <person name="Kawaji H."/>
            <person name="Kawagashira N."/>
            <person name="Kawashima T."/>
            <person name="Kojima M."/>
            <person name="Kondo S."/>
            <person name="Konno H."/>
            <person name="Nakano K."/>
            <person name="Ninomiya N."/>
            <person name="Nishio T."/>
            <person name="Okada M."/>
            <person name="Plessy C."/>
            <person name="Shibata K."/>
            <person name="Shiraki T."/>
            <person name="Suzuki S."/>
            <person name="Tagami M."/>
            <person name="Waki K."/>
            <person name="Watahiki A."/>
            <person name="Okamura-Oho Y."/>
            <person name="Suzuki H."/>
            <person name="Kawai J."/>
            <person name="Hayashizaki Y."/>
        </authorList>
    </citation>
    <scope>NUCLEOTIDE SEQUENCE [LARGE SCALE MRNA]</scope>
    <source>
        <strain>C57BL/6J</strain>
        <tissue>Testis</tissue>
    </source>
</reference>
<reference key="2">
    <citation type="journal article" date="2004" name="Genome Res.">
        <title>The status, quality, and expansion of the NIH full-length cDNA project: the Mammalian Gene Collection (MGC).</title>
        <authorList>
            <consortium name="The MGC Project Team"/>
        </authorList>
    </citation>
    <scope>NUCLEOTIDE SEQUENCE [LARGE SCALE MRNA]</scope>
    <source>
        <tissue>Brain</tissue>
    </source>
</reference>
<reference key="3">
    <citation type="journal article" date="2010" name="Cell">
        <title>A tissue-specific atlas of mouse protein phosphorylation and expression.</title>
        <authorList>
            <person name="Huttlin E.L."/>
            <person name="Jedrychowski M.P."/>
            <person name="Elias J.E."/>
            <person name="Goswami T."/>
            <person name="Rad R."/>
            <person name="Beausoleil S.A."/>
            <person name="Villen J."/>
            <person name="Haas W."/>
            <person name="Sowa M.E."/>
            <person name="Gygi S.P."/>
        </authorList>
    </citation>
    <scope>IDENTIFICATION BY MASS SPECTROMETRY [LARGE SCALE ANALYSIS]</scope>
    <source>
        <tissue>Testis</tissue>
    </source>
</reference>
<evidence type="ECO:0000255" key="1">
    <source>
        <dbReference type="PROSITE-ProRule" id="PRU00448"/>
    </source>
</evidence>